<gene>
    <name evidence="1" type="primary">rpl15e</name>
    <name type="ordered locus">PTO0875</name>
</gene>
<accession>Q6L0P2</accession>
<comment type="similarity">
    <text evidence="1">Belongs to the eukaryotic ribosomal protein eL15 family.</text>
</comment>
<name>RL15E_PICTO</name>
<sequence>MLSSYSMIRDSWKKLKKSDIYPVQKARMVSWRKSGSVVRLDYPTRLDRARSLGYKAKQGFIIVRSRVRKGGQHRPKIMGGRRPRRLAYNKLTVKKSIQLIAEERAADKYPNMEVLNSYYVGEDGLYKYYEVILIDRSSPAVLSDKNVSWIANSANKGRVYRGLTSAGYKSRGLGHGRLGSAKSRPSIRANGRLRR</sequence>
<keyword id="KW-0687">Ribonucleoprotein</keyword>
<keyword id="KW-0689">Ribosomal protein</keyword>
<protein>
    <recommendedName>
        <fullName evidence="1">Large ribosomal subunit protein eL15</fullName>
    </recommendedName>
    <alternativeName>
        <fullName evidence="3">50S ribosomal protein L15e</fullName>
    </alternativeName>
</protein>
<evidence type="ECO:0000255" key="1">
    <source>
        <dbReference type="HAMAP-Rule" id="MF_00256"/>
    </source>
</evidence>
<evidence type="ECO:0000256" key="2">
    <source>
        <dbReference type="SAM" id="MobiDB-lite"/>
    </source>
</evidence>
<evidence type="ECO:0000305" key="3"/>
<reference key="1">
    <citation type="journal article" date="2004" name="Proc. Natl. Acad. Sci. U.S.A.">
        <title>Genome sequence of Picrophilus torridus and its implications for life around pH 0.</title>
        <authorList>
            <person name="Fuetterer O."/>
            <person name="Angelov A."/>
            <person name="Liesegang H."/>
            <person name="Gottschalk G."/>
            <person name="Schleper C."/>
            <person name="Schepers B."/>
            <person name="Dock C."/>
            <person name="Antranikian G."/>
            <person name="Liebl W."/>
        </authorList>
    </citation>
    <scope>NUCLEOTIDE SEQUENCE [LARGE SCALE GENOMIC DNA]</scope>
    <source>
        <strain>ATCC 700027 / DSM 9790 / JCM 10055 / NBRC 100828 / KAW 2/3</strain>
    </source>
</reference>
<organism>
    <name type="scientific">Picrophilus torridus (strain ATCC 700027 / DSM 9790 / JCM 10055 / NBRC 100828 / KAW 2/3)</name>
    <dbReference type="NCBI Taxonomy" id="1122961"/>
    <lineage>
        <taxon>Archaea</taxon>
        <taxon>Methanobacteriati</taxon>
        <taxon>Thermoplasmatota</taxon>
        <taxon>Thermoplasmata</taxon>
        <taxon>Thermoplasmatales</taxon>
        <taxon>Picrophilaceae</taxon>
        <taxon>Picrophilus</taxon>
    </lineage>
</organism>
<proteinExistence type="inferred from homology"/>
<feature type="chain" id="PRO_0000127579" description="Large ribosomal subunit protein eL15">
    <location>
        <begin position="1"/>
        <end position="195"/>
    </location>
</feature>
<feature type="region of interest" description="Disordered" evidence="2">
    <location>
        <begin position="174"/>
        <end position="195"/>
    </location>
</feature>
<dbReference type="EMBL" id="AE017261">
    <property type="protein sequence ID" value="AAT43460.1"/>
    <property type="molecule type" value="Genomic_DNA"/>
</dbReference>
<dbReference type="RefSeq" id="WP_011177676.1">
    <property type="nucleotide sequence ID" value="NC_005877.1"/>
</dbReference>
<dbReference type="SMR" id="Q6L0P2"/>
<dbReference type="FunCoup" id="Q6L0P2">
    <property type="interactions" value="162"/>
</dbReference>
<dbReference type="STRING" id="263820.PTO0875"/>
<dbReference type="PaxDb" id="263820-PTO0875"/>
<dbReference type="GeneID" id="2844154"/>
<dbReference type="KEGG" id="pto:PTO0875"/>
<dbReference type="PATRIC" id="fig|263820.9.peg.913"/>
<dbReference type="eggNOG" id="arCOG04209">
    <property type="taxonomic scope" value="Archaea"/>
</dbReference>
<dbReference type="HOGENOM" id="CLU_080796_1_0_2"/>
<dbReference type="InParanoid" id="Q6L0P2"/>
<dbReference type="OrthoDB" id="8183at2157"/>
<dbReference type="Proteomes" id="UP000000438">
    <property type="component" value="Chromosome"/>
</dbReference>
<dbReference type="GO" id="GO:0022625">
    <property type="term" value="C:cytosolic large ribosomal subunit"/>
    <property type="evidence" value="ECO:0007669"/>
    <property type="project" value="TreeGrafter"/>
</dbReference>
<dbReference type="GO" id="GO:0003723">
    <property type="term" value="F:RNA binding"/>
    <property type="evidence" value="ECO:0007669"/>
    <property type="project" value="TreeGrafter"/>
</dbReference>
<dbReference type="GO" id="GO:0003735">
    <property type="term" value="F:structural constituent of ribosome"/>
    <property type="evidence" value="ECO:0007669"/>
    <property type="project" value="InterPro"/>
</dbReference>
<dbReference type="GO" id="GO:0002181">
    <property type="term" value="P:cytoplasmic translation"/>
    <property type="evidence" value="ECO:0007669"/>
    <property type="project" value="TreeGrafter"/>
</dbReference>
<dbReference type="FunFam" id="3.40.1120.10:FF:000002">
    <property type="entry name" value="50S ribosomal protein L15e"/>
    <property type="match status" value="1"/>
</dbReference>
<dbReference type="Gene3D" id="3.40.1120.10">
    <property type="entry name" value="Ribosomal protein l15e"/>
    <property type="match status" value="1"/>
</dbReference>
<dbReference type="HAMAP" id="MF_00256">
    <property type="entry name" value="Ribosomal_eL15"/>
    <property type="match status" value="1"/>
</dbReference>
<dbReference type="InterPro" id="IPR024794">
    <property type="entry name" value="Rbsml_eL15_core_dom_sf"/>
</dbReference>
<dbReference type="InterPro" id="IPR000439">
    <property type="entry name" value="Ribosomal_eL15"/>
</dbReference>
<dbReference type="InterPro" id="IPR020926">
    <property type="entry name" value="Ribosomal_eL15_arc"/>
</dbReference>
<dbReference type="InterPro" id="IPR020925">
    <property type="entry name" value="Ribosomal_eL15_CS"/>
</dbReference>
<dbReference type="InterPro" id="IPR012678">
    <property type="entry name" value="Ribosomal_uL23/eL15/eS24_sf"/>
</dbReference>
<dbReference type="NCBIfam" id="NF003269">
    <property type="entry name" value="PRK04243.1"/>
    <property type="match status" value="1"/>
</dbReference>
<dbReference type="PANTHER" id="PTHR11847:SF4">
    <property type="entry name" value="LARGE RIBOSOMAL SUBUNIT PROTEIN EL15"/>
    <property type="match status" value="1"/>
</dbReference>
<dbReference type="PANTHER" id="PTHR11847">
    <property type="entry name" value="RIBOSOMAL PROTEIN L15"/>
    <property type="match status" value="1"/>
</dbReference>
<dbReference type="Pfam" id="PF00827">
    <property type="entry name" value="Ribosomal_L15e"/>
    <property type="match status" value="1"/>
</dbReference>
<dbReference type="SMART" id="SM01384">
    <property type="entry name" value="Ribosomal_L15e"/>
    <property type="match status" value="1"/>
</dbReference>
<dbReference type="SUPFAM" id="SSF54189">
    <property type="entry name" value="Ribosomal proteins S24e, L23 and L15e"/>
    <property type="match status" value="1"/>
</dbReference>
<dbReference type="PROSITE" id="PS01194">
    <property type="entry name" value="RIBOSOMAL_L15E"/>
    <property type="match status" value="1"/>
</dbReference>